<reference key="1">
    <citation type="journal article" date="2011" name="J. Bacteriol.">
        <title>Comparative genomics of 28 Salmonella enterica isolates: evidence for CRISPR-mediated adaptive sublineage evolution.</title>
        <authorList>
            <person name="Fricke W.F."/>
            <person name="Mammel M.K."/>
            <person name="McDermott P.F."/>
            <person name="Tartera C."/>
            <person name="White D.G."/>
            <person name="Leclerc J.E."/>
            <person name="Ravel J."/>
            <person name="Cebula T.A."/>
        </authorList>
    </citation>
    <scope>NUCLEOTIDE SEQUENCE [LARGE SCALE GENOMIC DNA]</scope>
    <source>
        <strain>CVM19633</strain>
    </source>
</reference>
<organism>
    <name type="scientific">Salmonella schwarzengrund (strain CVM19633)</name>
    <dbReference type="NCBI Taxonomy" id="439843"/>
    <lineage>
        <taxon>Bacteria</taxon>
        <taxon>Pseudomonadati</taxon>
        <taxon>Pseudomonadota</taxon>
        <taxon>Gammaproteobacteria</taxon>
        <taxon>Enterobacterales</taxon>
        <taxon>Enterobacteriaceae</taxon>
        <taxon>Salmonella</taxon>
    </lineage>
</organism>
<keyword id="KW-0574">Periplasm</keyword>
<keyword id="KW-0732">Signal</keyword>
<proteinExistence type="inferred from homology"/>
<evidence type="ECO:0000255" key="1">
    <source>
        <dbReference type="HAMAP-Rule" id="MF_00780"/>
    </source>
</evidence>
<dbReference type="EMBL" id="CP001127">
    <property type="protein sequence ID" value="ACF90034.1"/>
    <property type="molecule type" value="Genomic_DNA"/>
</dbReference>
<dbReference type="RefSeq" id="WP_000739886.1">
    <property type="nucleotide sequence ID" value="NC_011094.1"/>
</dbReference>
<dbReference type="SMR" id="B4TSR8"/>
<dbReference type="KEGG" id="sew:SeSA_A1224"/>
<dbReference type="HOGENOM" id="CLU_071003_1_2_6"/>
<dbReference type="Proteomes" id="UP000001865">
    <property type="component" value="Chromosome"/>
</dbReference>
<dbReference type="GO" id="GO:0042597">
    <property type="term" value="C:periplasmic space"/>
    <property type="evidence" value="ECO:0007669"/>
    <property type="project" value="UniProtKB-SubCell"/>
</dbReference>
<dbReference type="Gene3D" id="2.40.128.110">
    <property type="entry name" value="Lipid/polyisoprenoid-binding, YceI-like"/>
    <property type="match status" value="1"/>
</dbReference>
<dbReference type="HAMAP" id="MF_00780">
    <property type="entry name" value="UPF0312"/>
    <property type="match status" value="1"/>
</dbReference>
<dbReference type="InterPro" id="IPR007372">
    <property type="entry name" value="Lipid/polyisoprenoid-bd_YceI"/>
</dbReference>
<dbReference type="InterPro" id="IPR036761">
    <property type="entry name" value="TTHA0802/YceI-like_sf"/>
</dbReference>
<dbReference type="InterPro" id="IPR023480">
    <property type="entry name" value="UPF0312/YceI"/>
</dbReference>
<dbReference type="NCBIfam" id="NF002994">
    <property type="entry name" value="PRK03757.1"/>
    <property type="match status" value="1"/>
</dbReference>
<dbReference type="PANTHER" id="PTHR34406">
    <property type="entry name" value="PROTEIN YCEI"/>
    <property type="match status" value="1"/>
</dbReference>
<dbReference type="PANTHER" id="PTHR34406:SF1">
    <property type="entry name" value="PROTEIN YCEI"/>
    <property type="match status" value="1"/>
</dbReference>
<dbReference type="Pfam" id="PF04264">
    <property type="entry name" value="YceI"/>
    <property type="match status" value="1"/>
</dbReference>
<dbReference type="SMART" id="SM00867">
    <property type="entry name" value="YceI"/>
    <property type="match status" value="1"/>
</dbReference>
<dbReference type="SUPFAM" id="SSF101874">
    <property type="entry name" value="YceI-like"/>
    <property type="match status" value="1"/>
</dbReference>
<feature type="signal peptide" evidence="1">
    <location>
        <begin position="1"/>
        <end position="22"/>
    </location>
</feature>
<feature type="chain" id="PRO_1000200481" description="Protein YceI">
    <location>
        <begin position="23"/>
        <end position="191"/>
    </location>
</feature>
<name>YCEI_SALSV</name>
<comment type="subcellular location">
    <subcellularLocation>
        <location evidence="1">Periplasm</location>
    </subcellularLocation>
</comment>
<comment type="similarity">
    <text evidence="1">Belongs to the UPF0312 family. Type 1 subfamily.</text>
</comment>
<sequence>MKKNLLGFTLASLLFTTGSAVAAEYKIDKEGQHAFVNFRIQHLGYSWLYGTFKDFDGTFTFDEKNPSADKVNVTINTNSVDTNHAERDKHLRSAEFLNVAKFPQATFTSTSVKKEGDELDITGNLTLNGVTKPVTLEAKLMGQGDDPWGGKRAGFEAEGKIKLKDFNITTDLGPASQEVELIISVEGVQQK</sequence>
<gene>
    <name evidence="1" type="primary">yceI</name>
    <name type="ordered locus">SeSA_A1224</name>
</gene>
<protein>
    <recommendedName>
        <fullName evidence="1">Protein YceI</fullName>
    </recommendedName>
</protein>
<accession>B4TSR8</accession>